<accession>B3Q845</accession>
<evidence type="ECO:0000255" key="1">
    <source>
        <dbReference type="HAMAP-Rule" id="MF_01031"/>
    </source>
</evidence>
<dbReference type="EC" id="4.2.1.33" evidence="1"/>
<dbReference type="EMBL" id="CP001096">
    <property type="protein sequence ID" value="ACE98794.1"/>
    <property type="molecule type" value="Genomic_DNA"/>
</dbReference>
<dbReference type="RefSeq" id="WP_011155803.1">
    <property type="nucleotide sequence ID" value="NC_011004.1"/>
</dbReference>
<dbReference type="SMR" id="B3Q845"/>
<dbReference type="GeneID" id="66891241"/>
<dbReference type="KEGG" id="rpt:Rpal_0234"/>
<dbReference type="HOGENOM" id="CLU_081378_0_3_5"/>
<dbReference type="OrthoDB" id="9777465at2"/>
<dbReference type="UniPathway" id="UPA00048">
    <property type="reaction ID" value="UER00071"/>
</dbReference>
<dbReference type="Proteomes" id="UP000001725">
    <property type="component" value="Chromosome"/>
</dbReference>
<dbReference type="GO" id="GO:0009316">
    <property type="term" value="C:3-isopropylmalate dehydratase complex"/>
    <property type="evidence" value="ECO:0007669"/>
    <property type="project" value="InterPro"/>
</dbReference>
<dbReference type="GO" id="GO:0003861">
    <property type="term" value="F:3-isopropylmalate dehydratase activity"/>
    <property type="evidence" value="ECO:0007669"/>
    <property type="project" value="UniProtKB-UniRule"/>
</dbReference>
<dbReference type="GO" id="GO:0009098">
    <property type="term" value="P:L-leucine biosynthetic process"/>
    <property type="evidence" value="ECO:0007669"/>
    <property type="project" value="UniProtKB-UniRule"/>
</dbReference>
<dbReference type="CDD" id="cd01577">
    <property type="entry name" value="IPMI_Swivel"/>
    <property type="match status" value="1"/>
</dbReference>
<dbReference type="FunFam" id="3.20.19.10:FF:000003">
    <property type="entry name" value="3-isopropylmalate dehydratase small subunit"/>
    <property type="match status" value="1"/>
</dbReference>
<dbReference type="Gene3D" id="3.20.19.10">
    <property type="entry name" value="Aconitase, domain 4"/>
    <property type="match status" value="1"/>
</dbReference>
<dbReference type="HAMAP" id="MF_01031">
    <property type="entry name" value="LeuD_type1"/>
    <property type="match status" value="1"/>
</dbReference>
<dbReference type="InterPro" id="IPR004431">
    <property type="entry name" value="3-IsopropMal_deHydase_ssu"/>
</dbReference>
<dbReference type="InterPro" id="IPR015928">
    <property type="entry name" value="Aconitase/3IPM_dehydase_swvl"/>
</dbReference>
<dbReference type="InterPro" id="IPR000573">
    <property type="entry name" value="AconitaseA/IPMdHydase_ssu_swvl"/>
</dbReference>
<dbReference type="InterPro" id="IPR033940">
    <property type="entry name" value="IPMI_Swivel"/>
</dbReference>
<dbReference type="InterPro" id="IPR050075">
    <property type="entry name" value="LeuD"/>
</dbReference>
<dbReference type="NCBIfam" id="TIGR00171">
    <property type="entry name" value="leuD"/>
    <property type="match status" value="1"/>
</dbReference>
<dbReference type="NCBIfam" id="NF002458">
    <property type="entry name" value="PRK01641.1"/>
    <property type="match status" value="1"/>
</dbReference>
<dbReference type="PANTHER" id="PTHR43345:SF5">
    <property type="entry name" value="3-ISOPROPYLMALATE DEHYDRATASE SMALL SUBUNIT"/>
    <property type="match status" value="1"/>
</dbReference>
<dbReference type="PANTHER" id="PTHR43345">
    <property type="entry name" value="3-ISOPROPYLMALATE DEHYDRATASE SMALL SUBUNIT 2-RELATED-RELATED"/>
    <property type="match status" value="1"/>
</dbReference>
<dbReference type="Pfam" id="PF00694">
    <property type="entry name" value="Aconitase_C"/>
    <property type="match status" value="1"/>
</dbReference>
<dbReference type="SUPFAM" id="SSF52016">
    <property type="entry name" value="LeuD/IlvD-like"/>
    <property type="match status" value="1"/>
</dbReference>
<keyword id="KW-0028">Amino-acid biosynthesis</keyword>
<keyword id="KW-0100">Branched-chain amino acid biosynthesis</keyword>
<keyword id="KW-0432">Leucine biosynthesis</keyword>
<keyword id="KW-0456">Lyase</keyword>
<gene>
    <name evidence="1" type="primary">leuD</name>
    <name type="ordered locus">Rpal_0234</name>
</gene>
<name>LEUD_RHOPT</name>
<protein>
    <recommendedName>
        <fullName evidence="1">3-isopropylmalate dehydratase small subunit</fullName>
        <ecNumber evidence="1">4.2.1.33</ecNumber>
    </recommendedName>
    <alternativeName>
        <fullName evidence="1">Alpha-IPM isomerase</fullName>
        <shortName evidence="1">IPMI</shortName>
    </alternativeName>
    <alternativeName>
        <fullName evidence="1">Isopropylmalate isomerase</fullName>
    </alternativeName>
</protein>
<feature type="chain" id="PRO_1000135830" description="3-isopropylmalate dehydratase small subunit">
    <location>
        <begin position="1"/>
        <end position="201"/>
    </location>
</feature>
<reference key="1">
    <citation type="submission" date="2008-05" db="EMBL/GenBank/DDBJ databases">
        <title>Complete sequence of Rhodopseudomonas palustris TIE-1.</title>
        <authorList>
            <consortium name="US DOE Joint Genome Institute"/>
            <person name="Lucas S."/>
            <person name="Copeland A."/>
            <person name="Lapidus A."/>
            <person name="Glavina del Rio T."/>
            <person name="Dalin E."/>
            <person name="Tice H."/>
            <person name="Pitluck S."/>
            <person name="Chain P."/>
            <person name="Malfatti S."/>
            <person name="Shin M."/>
            <person name="Vergez L."/>
            <person name="Lang D."/>
            <person name="Schmutz J."/>
            <person name="Larimer F."/>
            <person name="Land M."/>
            <person name="Hauser L."/>
            <person name="Kyrpides N."/>
            <person name="Mikhailova N."/>
            <person name="Emerson D."/>
            <person name="Newman D.K."/>
            <person name="Roden E."/>
            <person name="Richardson P."/>
        </authorList>
    </citation>
    <scope>NUCLEOTIDE SEQUENCE [LARGE SCALE GENOMIC DNA]</scope>
    <source>
        <strain>TIE-1</strain>
    </source>
</reference>
<organism>
    <name type="scientific">Rhodopseudomonas palustris (strain TIE-1)</name>
    <dbReference type="NCBI Taxonomy" id="395960"/>
    <lineage>
        <taxon>Bacteria</taxon>
        <taxon>Pseudomonadati</taxon>
        <taxon>Pseudomonadota</taxon>
        <taxon>Alphaproteobacteria</taxon>
        <taxon>Hyphomicrobiales</taxon>
        <taxon>Nitrobacteraceae</taxon>
        <taxon>Rhodopseudomonas</taxon>
    </lineage>
</organism>
<comment type="function">
    <text evidence="1">Catalyzes the isomerization between 2-isopropylmalate and 3-isopropylmalate, via the formation of 2-isopropylmaleate.</text>
</comment>
<comment type="catalytic activity">
    <reaction evidence="1">
        <text>(2R,3S)-3-isopropylmalate = (2S)-2-isopropylmalate</text>
        <dbReference type="Rhea" id="RHEA:32287"/>
        <dbReference type="ChEBI" id="CHEBI:1178"/>
        <dbReference type="ChEBI" id="CHEBI:35121"/>
        <dbReference type="EC" id="4.2.1.33"/>
    </reaction>
</comment>
<comment type="pathway">
    <text evidence="1">Amino-acid biosynthesis; L-leucine biosynthesis; L-leucine from 3-methyl-2-oxobutanoate: step 2/4.</text>
</comment>
<comment type="subunit">
    <text evidence="1">Heterodimer of LeuC and LeuD.</text>
</comment>
<comment type="similarity">
    <text evidence="1">Belongs to the LeuD family. LeuD type 1 subfamily.</text>
</comment>
<sequence length="201" mass="22324">MDKFTTLEGVAAPLKIINVDTDMIIPKQYLKTIKRTGLGKGLFSEQRYKDDGSENPDFILNKPAYRGAKILVAGDNFGCGSSREHAPWALLDFGIRCVISTSFGDIFYNNCFKNGVLPIRVSQADLDKLFDDAERGSNATMTIDLQAQEIRGPDGGAIKFEIDPFRKHCLINGLDDIGLTLEKKPSIDAYETKLKTERAWA</sequence>
<proteinExistence type="inferred from homology"/>